<protein>
    <recommendedName>
        <fullName>Orotidine 5'-phosphate decarboxylase</fullName>
        <ecNumber>4.1.1.23</ecNumber>
    </recommendedName>
    <alternativeName>
        <fullName>OMP decarboxylase</fullName>
        <shortName>OMPDCase</shortName>
        <shortName>OMPdecase</shortName>
    </alternativeName>
    <alternativeName>
        <fullName>Uridine 5'-monophosphate synthase</fullName>
        <shortName>UMP synthase</shortName>
    </alternativeName>
</protein>
<comment type="catalytic activity">
    <reaction evidence="2">
        <text>orotidine 5'-phosphate + H(+) = UMP + CO2</text>
        <dbReference type="Rhea" id="RHEA:11596"/>
        <dbReference type="ChEBI" id="CHEBI:15378"/>
        <dbReference type="ChEBI" id="CHEBI:16526"/>
        <dbReference type="ChEBI" id="CHEBI:57538"/>
        <dbReference type="ChEBI" id="CHEBI:57865"/>
        <dbReference type="EC" id="4.1.1.23"/>
    </reaction>
</comment>
<comment type="pathway">
    <text>Pyrimidine metabolism; UMP biosynthesis via de novo pathway; UMP from orotate: step 2/2.</text>
</comment>
<comment type="similarity">
    <text evidence="3">Belongs to the OMP decarboxylase family.</text>
</comment>
<name>PYRF_CANAL</name>
<reference key="1">
    <citation type="journal article" date="1989" name="Curr. Genet.">
        <title>Sequence and transcript analysis of the C. albicans URA3 gene encoding orotidine-5'-phosphate decarboxylase.</title>
        <authorList>
            <person name="Ernst J.F."/>
            <person name="Losberger C."/>
        </authorList>
    </citation>
    <scope>NUCLEOTIDE SEQUENCE [GENOMIC DNA]</scope>
    <source>
        <strain>ATCC 10231 / CBS 6431 / DSM 1386 / NBRC 1594</strain>
    </source>
</reference>
<reference key="2">
    <citation type="submission" date="1998-11" db="EMBL/GenBank/DDBJ databases">
        <title>Construction and evaluation of a Candida albicans gene expression cassette.</title>
        <authorList>
            <person name="Hoyer L.L."/>
        </authorList>
    </citation>
    <scope>NUCLEOTIDE SEQUENCE [GENOMIC DNA]</scope>
    <source>
        <strain>1177</strain>
    </source>
</reference>
<reference key="3">
    <citation type="journal article" date="2004" name="Proc. Natl. Acad. Sci. U.S.A.">
        <title>The diploid genome sequence of Candida albicans.</title>
        <authorList>
            <person name="Jones T."/>
            <person name="Federspiel N.A."/>
            <person name="Chibana H."/>
            <person name="Dungan J."/>
            <person name="Kalman S."/>
            <person name="Magee B.B."/>
            <person name="Newport G."/>
            <person name="Thorstenson Y.R."/>
            <person name="Agabian N."/>
            <person name="Magee P.T."/>
            <person name="Davis R.W."/>
            <person name="Scherer S."/>
        </authorList>
    </citation>
    <scope>NUCLEOTIDE SEQUENCE [LARGE SCALE GENOMIC DNA]</scope>
    <source>
        <strain>SC5314 / ATCC MYA-2876</strain>
    </source>
</reference>
<reference key="4">
    <citation type="journal article" date="2007" name="Genome Biol.">
        <title>Assembly of the Candida albicans genome into sixteen supercontigs aligned on the eight chromosomes.</title>
        <authorList>
            <person name="van het Hoog M."/>
            <person name="Rast T.J."/>
            <person name="Martchenko M."/>
            <person name="Grindle S."/>
            <person name="Dignard D."/>
            <person name="Hogues H."/>
            <person name="Cuomo C."/>
            <person name="Berriman M."/>
            <person name="Scherer S."/>
            <person name="Magee B.B."/>
            <person name="Whiteway M."/>
            <person name="Chibana H."/>
            <person name="Nantel A."/>
            <person name="Magee P.T."/>
        </authorList>
    </citation>
    <scope>GENOME REANNOTATION</scope>
    <source>
        <strain>SC5314 / ATCC MYA-2876</strain>
    </source>
</reference>
<reference key="5">
    <citation type="journal article" date="2013" name="Genome Biol.">
        <title>Assembly of a phased diploid Candida albicans genome facilitates allele-specific measurements and provides a simple model for repeat and indel structure.</title>
        <authorList>
            <person name="Muzzey D."/>
            <person name="Schwartz K."/>
            <person name="Weissman J.S."/>
            <person name="Sherlock G."/>
        </authorList>
    </citation>
    <scope>NUCLEOTIDE SEQUENCE [LARGE SCALE GENOMIC DNA]</scope>
    <scope>GENOME REANNOTATION</scope>
    <source>
        <strain>SC5314 / ATCC MYA-2876</strain>
    </source>
</reference>
<dbReference type="EC" id="4.1.1.23"/>
<dbReference type="EMBL" id="X14198">
    <property type="protein sequence ID" value="CAA32410.1"/>
    <property type="molecule type" value="Genomic_DNA"/>
</dbReference>
<dbReference type="EMBL" id="AF109400">
    <property type="protein sequence ID" value="AAF13298.1"/>
    <property type="molecule type" value="Genomic_DNA"/>
</dbReference>
<dbReference type="EMBL" id="CP017625">
    <property type="protein sequence ID" value="AOW28178.1"/>
    <property type="molecule type" value="Genomic_DNA"/>
</dbReference>
<dbReference type="PIR" id="A48331">
    <property type="entry name" value="DCCKA"/>
</dbReference>
<dbReference type="RefSeq" id="XP_721787.2">
    <property type="nucleotide sequence ID" value="XM_716694.2"/>
</dbReference>
<dbReference type="SMR" id="P13649"/>
<dbReference type="FunCoup" id="P13649">
    <property type="interactions" value="1154"/>
</dbReference>
<dbReference type="STRING" id="237561.P13649"/>
<dbReference type="EnsemblFungi" id="C3_01350C_A-T">
    <property type="protein sequence ID" value="C3_01350C_A-T-p1"/>
    <property type="gene ID" value="C3_01350C_A"/>
</dbReference>
<dbReference type="GeneID" id="3636649"/>
<dbReference type="KEGG" id="cal:CAALFM_C301350CA"/>
<dbReference type="CGD" id="CAL0000191638">
    <property type="gene designation" value="URA3"/>
</dbReference>
<dbReference type="VEuPathDB" id="FungiDB:C3_01350C_A"/>
<dbReference type="eggNOG" id="KOG1377">
    <property type="taxonomic scope" value="Eukaryota"/>
</dbReference>
<dbReference type="HOGENOM" id="CLU_030821_0_0_1"/>
<dbReference type="InParanoid" id="P13649"/>
<dbReference type="OrthoDB" id="10263753at2759"/>
<dbReference type="UniPathway" id="UPA00070">
    <property type="reaction ID" value="UER00120"/>
</dbReference>
<dbReference type="PRO" id="PR:P13649"/>
<dbReference type="Proteomes" id="UP000000559">
    <property type="component" value="Chromosome 3"/>
</dbReference>
<dbReference type="GO" id="GO:0005829">
    <property type="term" value="C:cytosol"/>
    <property type="evidence" value="ECO:0000318"/>
    <property type="project" value="GO_Central"/>
</dbReference>
<dbReference type="GO" id="GO:0062040">
    <property type="term" value="C:fungal biofilm matrix"/>
    <property type="evidence" value="ECO:0000314"/>
    <property type="project" value="CGD"/>
</dbReference>
<dbReference type="GO" id="GO:0004590">
    <property type="term" value="F:orotidine-5'-phosphate decarboxylase activity"/>
    <property type="evidence" value="ECO:0000315"/>
    <property type="project" value="CGD"/>
</dbReference>
<dbReference type="GO" id="GO:0006207">
    <property type="term" value="P:'de novo' pyrimidine nucleobase biosynthetic process"/>
    <property type="evidence" value="ECO:0000318"/>
    <property type="project" value="GO_Central"/>
</dbReference>
<dbReference type="GO" id="GO:0044205">
    <property type="term" value="P:'de novo' UMP biosynthetic process"/>
    <property type="evidence" value="ECO:0007669"/>
    <property type="project" value="UniProtKB-UniPathway"/>
</dbReference>
<dbReference type="GO" id="GO:0044406">
    <property type="term" value="P:adhesion of symbiont to host"/>
    <property type="evidence" value="ECO:0000315"/>
    <property type="project" value="CGD"/>
</dbReference>
<dbReference type="GO" id="GO:0016477">
    <property type="term" value="P:cell migration"/>
    <property type="evidence" value="ECO:0000315"/>
    <property type="project" value="CGD"/>
</dbReference>
<dbReference type="GO" id="GO:0030447">
    <property type="term" value="P:filamentous growth"/>
    <property type="evidence" value="ECO:0000315"/>
    <property type="project" value="CGD"/>
</dbReference>
<dbReference type="GO" id="GO:0044182">
    <property type="term" value="P:filamentous growth of a population of unicellular organisms"/>
    <property type="evidence" value="ECO:0000315"/>
    <property type="project" value="CGD"/>
</dbReference>
<dbReference type="GO" id="GO:0031505">
    <property type="term" value="P:fungal-type cell wall organization"/>
    <property type="evidence" value="ECO:0000315"/>
    <property type="project" value="CGD"/>
</dbReference>
<dbReference type="GO" id="GO:0019856">
    <property type="term" value="P:pyrimidine nucleobase biosynthetic process"/>
    <property type="evidence" value="ECO:0000316"/>
    <property type="project" value="CGD"/>
</dbReference>
<dbReference type="GO" id="GO:0046109">
    <property type="term" value="P:uridine biosynthetic process"/>
    <property type="evidence" value="ECO:0000315"/>
    <property type="project" value="CGD"/>
</dbReference>
<dbReference type="CDD" id="cd04725">
    <property type="entry name" value="OMP_decarboxylase_like"/>
    <property type="match status" value="1"/>
</dbReference>
<dbReference type="FunFam" id="3.20.20.70:FF:000114">
    <property type="entry name" value="Decarboxylase,orotidine phosphate"/>
    <property type="match status" value="1"/>
</dbReference>
<dbReference type="Gene3D" id="3.20.20.70">
    <property type="entry name" value="Aldolase class I"/>
    <property type="match status" value="1"/>
</dbReference>
<dbReference type="InterPro" id="IPR013785">
    <property type="entry name" value="Aldolase_TIM"/>
</dbReference>
<dbReference type="InterPro" id="IPR014732">
    <property type="entry name" value="OMPdecase"/>
</dbReference>
<dbReference type="InterPro" id="IPR018089">
    <property type="entry name" value="OMPdecase_AS"/>
</dbReference>
<dbReference type="InterPro" id="IPR001754">
    <property type="entry name" value="OMPdeCOase_dom"/>
</dbReference>
<dbReference type="InterPro" id="IPR011060">
    <property type="entry name" value="RibuloseP-bd_barrel"/>
</dbReference>
<dbReference type="NCBIfam" id="TIGR01740">
    <property type="entry name" value="pyrF"/>
    <property type="match status" value="1"/>
</dbReference>
<dbReference type="PANTHER" id="PTHR32119">
    <property type="entry name" value="OROTIDINE 5'-PHOSPHATE DECARBOXYLASE"/>
    <property type="match status" value="1"/>
</dbReference>
<dbReference type="PANTHER" id="PTHR32119:SF2">
    <property type="entry name" value="OROTIDINE 5'-PHOSPHATE DECARBOXYLASE"/>
    <property type="match status" value="1"/>
</dbReference>
<dbReference type="Pfam" id="PF00215">
    <property type="entry name" value="OMPdecase"/>
    <property type="match status" value="1"/>
</dbReference>
<dbReference type="SMART" id="SM00934">
    <property type="entry name" value="OMPdecase"/>
    <property type="match status" value="1"/>
</dbReference>
<dbReference type="SUPFAM" id="SSF51366">
    <property type="entry name" value="Ribulose-phoshate binding barrel"/>
    <property type="match status" value="1"/>
</dbReference>
<dbReference type="PROSITE" id="PS00156">
    <property type="entry name" value="OMPDECASE"/>
    <property type="match status" value="1"/>
</dbReference>
<keyword id="KW-0210">Decarboxylase</keyword>
<keyword id="KW-0456">Lyase</keyword>
<keyword id="KW-0665">Pyrimidine biosynthesis</keyword>
<keyword id="KW-1185">Reference proteome</keyword>
<feature type="chain" id="PRO_0000134646" description="Orotidine 5'-phosphate decarboxylase">
    <location>
        <begin position="1"/>
        <end position="270"/>
    </location>
</feature>
<feature type="active site" description="Proton donor" evidence="2">
    <location>
        <position position="95"/>
    </location>
</feature>
<feature type="binding site" evidence="1">
    <location>
        <position position="39"/>
    </location>
    <ligand>
        <name>substrate</name>
    </ligand>
</feature>
<feature type="binding site" evidence="1">
    <location>
        <begin position="61"/>
        <end position="63"/>
    </location>
    <ligand>
        <name>substrate</name>
    </ligand>
</feature>
<feature type="binding site" evidence="1">
    <location>
        <begin position="93"/>
        <end position="102"/>
    </location>
    <ligand>
        <name>substrate</name>
    </ligand>
</feature>
<feature type="binding site" evidence="1">
    <location>
        <position position="221"/>
    </location>
    <ligand>
        <name>substrate</name>
    </ligand>
</feature>
<feature type="binding site" evidence="1">
    <location>
        <position position="239"/>
    </location>
    <ligand>
        <name>substrate</name>
    </ligand>
</feature>
<feature type="sequence conflict" description="In Ref. 1; CAA32410 and 2; AAF13298." evidence="3" ref="1 2">
    <original>G</original>
    <variation>E</variation>
    <location>
        <position position="81"/>
    </location>
</feature>
<feature type="sequence conflict" description="In Ref. 1; CAA32410 and 2; AAF13298." evidence="3" ref="1 2">
    <original>V</original>
    <variation>I</variation>
    <location>
        <position position="184"/>
    </location>
</feature>
<feature type="sequence conflict" description="In Ref. 1; CAA32410." evidence="3" ref="1">
    <original>D</original>
    <variation>N</variation>
    <location>
        <position position="257"/>
    </location>
</feature>
<evidence type="ECO:0000250" key="1"/>
<evidence type="ECO:0000255" key="2">
    <source>
        <dbReference type="PROSITE-ProRule" id="PRU10110"/>
    </source>
</evidence>
<evidence type="ECO:0000305" key="3"/>
<sequence length="270" mass="29893">MTVNTKTYSERAETHASPVAQRLFRLMESKKTNLCASIDVDTTKEFLELIDKLGPYVCLIKTHIDIINDFSYESTIEPLLGLSRKHQFMIFEDRKFADIGNTVKKQYIGGVYKISSWADITNAHGVTGNGVVEGLKQGAKETTTNQEPRGLLMLAELSSVGSLAYGEYSQKTVEIAKSDKEFVVGFIAQRDMGGQEEGFDWLIMTPGVGLDDKGDGLGQQYRTVDEVVSTGTDIIIVGRGLFGKGRDPDIEGKRYRDAGWNAYLKKTGQL</sequence>
<organism>
    <name type="scientific">Candida albicans (strain SC5314 / ATCC MYA-2876)</name>
    <name type="common">Yeast</name>
    <dbReference type="NCBI Taxonomy" id="237561"/>
    <lineage>
        <taxon>Eukaryota</taxon>
        <taxon>Fungi</taxon>
        <taxon>Dikarya</taxon>
        <taxon>Ascomycota</taxon>
        <taxon>Saccharomycotina</taxon>
        <taxon>Pichiomycetes</taxon>
        <taxon>Debaryomycetaceae</taxon>
        <taxon>Candida/Lodderomyces clade</taxon>
        <taxon>Candida</taxon>
    </lineage>
</organism>
<gene>
    <name type="primary">URA3</name>
    <name type="ordered locus">CAALFM_C301350CA</name>
    <name type="ORF">CaO19.1716</name>
    <name type="ORF">CaO19.9284</name>
</gene>
<proteinExistence type="inferred from homology"/>
<accession>P13649</accession>
<accession>A0A1D8PJ56</accession>
<accession>Q5AJ76</accession>
<accession>Q9UVV6</accession>